<protein>
    <recommendedName>
        <fullName evidence="5">Large ribosomal subunit protein eL18</fullName>
    </recommendedName>
    <alternativeName>
        <fullName>60S ribosomal protein L18</fullName>
    </alternativeName>
</protein>
<name>RL18_MOUSE</name>
<organism>
    <name type="scientific">Mus musculus</name>
    <name type="common">Mouse</name>
    <dbReference type="NCBI Taxonomy" id="10090"/>
    <lineage>
        <taxon>Eukaryota</taxon>
        <taxon>Metazoa</taxon>
        <taxon>Chordata</taxon>
        <taxon>Craniata</taxon>
        <taxon>Vertebrata</taxon>
        <taxon>Euteleostomi</taxon>
        <taxon>Mammalia</taxon>
        <taxon>Eutheria</taxon>
        <taxon>Euarchontoglires</taxon>
        <taxon>Glires</taxon>
        <taxon>Rodentia</taxon>
        <taxon>Myomorpha</taxon>
        <taxon>Muroidea</taxon>
        <taxon>Muridae</taxon>
        <taxon>Murinae</taxon>
        <taxon>Mus</taxon>
        <taxon>Mus</taxon>
    </lineage>
</organism>
<reference key="1">
    <citation type="journal article" date="1993" name="Gene">
        <title>Sequence analysis of mouse cDNAs encoding ribosomal proteins L12 and L18.</title>
        <authorList>
            <person name="Hou E.W."/>
            <person name="Li S.S.L."/>
        </authorList>
    </citation>
    <scope>NUCLEOTIDE SEQUENCE [MRNA]</scope>
    <source>
        <strain>C57BL/6 X CBA</strain>
        <tissue>Lung</tissue>
    </source>
</reference>
<reference key="2">
    <citation type="journal article" date="2005" name="Science">
        <title>The transcriptional landscape of the mammalian genome.</title>
        <authorList>
            <person name="Carninci P."/>
            <person name="Kasukawa T."/>
            <person name="Katayama S."/>
            <person name="Gough J."/>
            <person name="Frith M.C."/>
            <person name="Maeda N."/>
            <person name="Oyama R."/>
            <person name="Ravasi T."/>
            <person name="Lenhard B."/>
            <person name="Wells C."/>
            <person name="Kodzius R."/>
            <person name="Shimokawa K."/>
            <person name="Bajic V.B."/>
            <person name="Brenner S.E."/>
            <person name="Batalov S."/>
            <person name="Forrest A.R."/>
            <person name="Zavolan M."/>
            <person name="Davis M.J."/>
            <person name="Wilming L.G."/>
            <person name="Aidinis V."/>
            <person name="Allen J.E."/>
            <person name="Ambesi-Impiombato A."/>
            <person name="Apweiler R."/>
            <person name="Aturaliya R.N."/>
            <person name="Bailey T.L."/>
            <person name="Bansal M."/>
            <person name="Baxter L."/>
            <person name="Beisel K.W."/>
            <person name="Bersano T."/>
            <person name="Bono H."/>
            <person name="Chalk A.M."/>
            <person name="Chiu K.P."/>
            <person name="Choudhary V."/>
            <person name="Christoffels A."/>
            <person name="Clutterbuck D.R."/>
            <person name="Crowe M.L."/>
            <person name="Dalla E."/>
            <person name="Dalrymple B.P."/>
            <person name="de Bono B."/>
            <person name="Della Gatta G."/>
            <person name="di Bernardo D."/>
            <person name="Down T."/>
            <person name="Engstrom P."/>
            <person name="Fagiolini M."/>
            <person name="Faulkner G."/>
            <person name="Fletcher C.F."/>
            <person name="Fukushima T."/>
            <person name="Furuno M."/>
            <person name="Futaki S."/>
            <person name="Gariboldi M."/>
            <person name="Georgii-Hemming P."/>
            <person name="Gingeras T.R."/>
            <person name="Gojobori T."/>
            <person name="Green R.E."/>
            <person name="Gustincich S."/>
            <person name="Harbers M."/>
            <person name="Hayashi Y."/>
            <person name="Hensch T.K."/>
            <person name="Hirokawa N."/>
            <person name="Hill D."/>
            <person name="Huminiecki L."/>
            <person name="Iacono M."/>
            <person name="Ikeo K."/>
            <person name="Iwama A."/>
            <person name="Ishikawa T."/>
            <person name="Jakt M."/>
            <person name="Kanapin A."/>
            <person name="Katoh M."/>
            <person name="Kawasawa Y."/>
            <person name="Kelso J."/>
            <person name="Kitamura H."/>
            <person name="Kitano H."/>
            <person name="Kollias G."/>
            <person name="Krishnan S.P."/>
            <person name="Kruger A."/>
            <person name="Kummerfeld S.K."/>
            <person name="Kurochkin I.V."/>
            <person name="Lareau L.F."/>
            <person name="Lazarevic D."/>
            <person name="Lipovich L."/>
            <person name="Liu J."/>
            <person name="Liuni S."/>
            <person name="McWilliam S."/>
            <person name="Madan Babu M."/>
            <person name="Madera M."/>
            <person name="Marchionni L."/>
            <person name="Matsuda H."/>
            <person name="Matsuzawa S."/>
            <person name="Miki H."/>
            <person name="Mignone F."/>
            <person name="Miyake S."/>
            <person name="Morris K."/>
            <person name="Mottagui-Tabar S."/>
            <person name="Mulder N."/>
            <person name="Nakano N."/>
            <person name="Nakauchi H."/>
            <person name="Ng P."/>
            <person name="Nilsson R."/>
            <person name="Nishiguchi S."/>
            <person name="Nishikawa S."/>
            <person name="Nori F."/>
            <person name="Ohara O."/>
            <person name="Okazaki Y."/>
            <person name="Orlando V."/>
            <person name="Pang K.C."/>
            <person name="Pavan W.J."/>
            <person name="Pavesi G."/>
            <person name="Pesole G."/>
            <person name="Petrovsky N."/>
            <person name="Piazza S."/>
            <person name="Reed J."/>
            <person name="Reid J.F."/>
            <person name="Ring B.Z."/>
            <person name="Ringwald M."/>
            <person name="Rost B."/>
            <person name="Ruan Y."/>
            <person name="Salzberg S.L."/>
            <person name="Sandelin A."/>
            <person name="Schneider C."/>
            <person name="Schoenbach C."/>
            <person name="Sekiguchi K."/>
            <person name="Semple C.A."/>
            <person name="Seno S."/>
            <person name="Sessa L."/>
            <person name="Sheng Y."/>
            <person name="Shibata Y."/>
            <person name="Shimada H."/>
            <person name="Shimada K."/>
            <person name="Silva D."/>
            <person name="Sinclair B."/>
            <person name="Sperling S."/>
            <person name="Stupka E."/>
            <person name="Sugiura K."/>
            <person name="Sultana R."/>
            <person name="Takenaka Y."/>
            <person name="Taki K."/>
            <person name="Tammoja K."/>
            <person name="Tan S.L."/>
            <person name="Tang S."/>
            <person name="Taylor M.S."/>
            <person name="Tegner J."/>
            <person name="Teichmann S.A."/>
            <person name="Ueda H.R."/>
            <person name="van Nimwegen E."/>
            <person name="Verardo R."/>
            <person name="Wei C.L."/>
            <person name="Yagi K."/>
            <person name="Yamanishi H."/>
            <person name="Zabarovsky E."/>
            <person name="Zhu S."/>
            <person name="Zimmer A."/>
            <person name="Hide W."/>
            <person name="Bult C."/>
            <person name="Grimmond S.M."/>
            <person name="Teasdale R.D."/>
            <person name="Liu E.T."/>
            <person name="Brusic V."/>
            <person name="Quackenbush J."/>
            <person name="Wahlestedt C."/>
            <person name="Mattick J.S."/>
            <person name="Hume D.A."/>
            <person name="Kai C."/>
            <person name="Sasaki D."/>
            <person name="Tomaru Y."/>
            <person name="Fukuda S."/>
            <person name="Kanamori-Katayama M."/>
            <person name="Suzuki M."/>
            <person name="Aoki J."/>
            <person name="Arakawa T."/>
            <person name="Iida J."/>
            <person name="Imamura K."/>
            <person name="Itoh M."/>
            <person name="Kato T."/>
            <person name="Kawaji H."/>
            <person name="Kawagashira N."/>
            <person name="Kawashima T."/>
            <person name="Kojima M."/>
            <person name="Kondo S."/>
            <person name="Konno H."/>
            <person name="Nakano K."/>
            <person name="Ninomiya N."/>
            <person name="Nishio T."/>
            <person name="Okada M."/>
            <person name="Plessy C."/>
            <person name="Shibata K."/>
            <person name="Shiraki T."/>
            <person name="Suzuki S."/>
            <person name="Tagami M."/>
            <person name="Waki K."/>
            <person name="Watahiki A."/>
            <person name="Okamura-Oho Y."/>
            <person name="Suzuki H."/>
            <person name="Kawai J."/>
            <person name="Hayashizaki Y."/>
        </authorList>
    </citation>
    <scope>NUCLEOTIDE SEQUENCE [LARGE SCALE MRNA]</scope>
    <source>
        <strain>C57BL/6J</strain>
        <tissue>Embryo</tissue>
        <tissue>Testis</tissue>
        <tissue>Tongue</tissue>
    </source>
</reference>
<reference key="3">
    <citation type="journal article" date="2004" name="Genome Res.">
        <title>The status, quality, and expansion of the NIH full-length cDNA project: the Mammalian Gene Collection (MGC).</title>
        <authorList>
            <consortium name="The MGC Project Team"/>
        </authorList>
    </citation>
    <scope>NUCLEOTIDE SEQUENCE [LARGE SCALE MRNA]</scope>
    <source>
        <strain>FVB/N-3</strain>
        <tissue>Mammary gland</tissue>
    </source>
</reference>
<reference key="4">
    <citation type="journal article" date="2010" name="Cell">
        <title>A tissue-specific atlas of mouse protein phosphorylation and expression.</title>
        <authorList>
            <person name="Huttlin E.L."/>
            <person name="Jedrychowski M.P."/>
            <person name="Elias J.E."/>
            <person name="Goswami T."/>
            <person name="Rad R."/>
            <person name="Beausoleil S.A."/>
            <person name="Villen J."/>
            <person name="Haas W."/>
            <person name="Sowa M.E."/>
            <person name="Gygi S.P."/>
        </authorList>
    </citation>
    <scope>PHOSPHORYLATION [LARGE SCALE ANALYSIS] AT SER-130</scope>
    <scope>IDENTIFICATION BY MASS SPECTROMETRY [LARGE SCALE ANALYSIS]</scope>
    <source>
        <tissue>Brain</tissue>
        <tissue>Brown adipose tissue</tissue>
        <tissue>Heart</tissue>
        <tissue>Kidney</tissue>
        <tissue>Liver</tissue>
        <tissue>Lung</tissue>
        <tissue>Pancreas</tissue>
        <tissue>Spleen</tissue>
        <tissue>Testis</tissue>
    </source>
</reference>
<reference evidence="6 7" key="5">
    <citation type="journal article" date="2022" name="Nature">
        <title>A male germ-cell-specific ribosome controls male fertility.</title>
        <authorList>
            <person name="Li H."/>
            <person name="Huo Y."/>
            <person name="He X."/>
            <person name="Yao L."/>
            <person name="Zhang H."/>
            <person name="Cui Y."/>
            <person name="Xiao H."/>
            <person name="Xie W."/>
            <person name="Zhang D."/>
            <person name="Wang Y."/>
            <person name="Zhang S."/>
            <person name="Tu H."/>
            <person name="Cheng Y."/>
            <person name="Guo Y."/>
            <person name="Cao X."/>
            <person name="Zhu Y."/>
            <person name="Jiang T."/>
            <person name="Guo X."/>
            <person name="Qin Y."/>
            <person name="Sha J."/>
        </authorList>
    </citation>
    <scope>STRUCTURE BY ELECTRON MICROSCOPY (3.03 ANGSTROMS) OF RIBOSOME</scope>
    <scope>FUNCTION</scope>
    <scope>SUBUNIT</scope>
    <scope>SUBCELLULAR LOCATION</scope>
</reference>
<keyword id="KW-0002">3D-structure</keyword>
<keyword id="KW-0963">Cytoplasm</keyword>
<keyword id="KW-0256">Endoplasmic reticulum</keyword>
<keyword id="KW-1017">Isopeptide bond</keyword>
<keyword id="KW-0597">Phosphoprotein</keyword>
<keyword id="KW-1185">Reference proteome</keyword>
<keyword id="KW-0687">Ribonucleoprotein</keyword>
<keyword id="KW-0689">Ribosomal protein</keyword>
<keyword id="KW-0832">Ubl conjugation</keyword>
<dbReference type="EMBL" id="L04128">
    <property type="protein sequence ID" value="AAA40067.1"/>
    <property type="molecule type" value="mRNA"/>
</dbReference>
<dbReference type="EMBL" id="AK007263">
    <property type="protein sequence ID" value="BAB24923.1"/>
    <property type="molecule type" value="mRNA"/>
</dbReference>
<dbReference type="EMBL" id="AK009044">
    <property type="protein sequence ID" value="BAB26043.1"/>
    <property type="molecule type" value="mRNA"/>
</dbReference>
<dbReference type="EMBL" id="AK010510">
    <property type="protein sequence ID" value="BAB26993.1"/>
    <property type="molecule type" value="mRNA"/>
</dbReference>
<dbReference type="EMBL" id="AK012580">
    <property type="protein sequence ID" value="BAB28332.1"/>
    <property type="molecule type" value="mRNA"/>
</dbReference>
<dbReference type="EMBL" id="BC082290">
    <property type="protein sequence ID" value="AAH82290.1"/>
    <property type="molecule type" value="mRNA"/>
</dbReference>
<dbReference type="CCDS" id="CCDS39958.1"/>
<dbReference type="PIR" id="JN0779">
    <property type="entry name" value="JN0779"/>
</dbReference>
<dbReference type="RefSeq" id="NP_033103.2">
    <property type="nucleotide sequence ID" value="NM_009077.3"/>
</dbReference>
<dbReference type="RefSeq" id="XP_030098107.1">
    <property type="nucleotide sequence ID" value="XM_030242247.1"/>
</dbReference>
<dbReference type="PDB" id="6SWA">
    <property type="method" value="EM"/>
    <property type="resolution" value="3.10 A"/>
    <property type="chains" value="P=1-188"/>
</dbReference>
<dbReference type="PDB" id="7CPU">
    <property type="method" value="EM"/>
    <property type="resolution" value="2.82 A"/>
    <property type="chains" value="LQ=1-188"/>
</dbReference>
<dbReference type="PDB" id="7CPV">
    <property type="method" value="EM"/>
    <property type="resolution" value="3.03 A"/>
    <property type="chains" value="LQ=1-188"/>
</dbReference>
<dbReference type="PDB" id="7LS1">
    <property type="method" value="EM"/>
    <property type="resolution" value="3.30 A"/>
    <property type="chains" value="K2=1-188"/>
</dbReference>
<dbReference type="PDB" id="7LS2">
    <property type="method" value="EM"/>
    <property type="resolution" value="3.10 A"/>
    <property type="chains" value="K2=1-188"/>
</dbReference>
<dbReference type="PDBsum" id="6SWA"/>
<dbReference type="PDBsum" id="7CPU"/>
<dbReference type="PDBsum" id="7CPV"/>
<dbReference type="PDBsum" id="7LS1"/>
<dbReference type="PDBsum" id="7LS2"/>
<dbReference type="EMDB" id="EMD-10321"/>
<dbReference type="EMDB" id="EMD-23500"/>
<dbReference type="EMDB" id="EMD-23501"/>
<dbReference type="EMDB" id="EMD-30432"/>
<dbReference type="EMDB" id="EMD-30433"/>
<dbReference type="SMR" id="P35980"/>
<dbReference type="BioGRID" id="202968">
    <property type="interactions" value="89"/>
</dbReference>
<dbReference type="ComplexPortal" id="CPX-5262">
    <property type="entry name" value="60S cytosolic large ribosomal subunit"/>
</dbReference>
<dbReference type="ComplexPortal" id="CPX-7662">
    <property type="entry name" value="60S cytosolic large ribosomal subunit, testis-specific variant"/>
</dbReference>
<dbReference type="ComplexPortal" id="CPX-7663">
    <property type="entry name" value="60S cytosolic large ribosomal subunit, striated muscle variant"/>
</dbReference>
<dbReference type="CORUM" id="P35980"/>
<dbReference type="FunCoup" id="P35980">
    <property type="interactions" value="2491"/>
</dbReference>
<dbReference type="IntAct" id="P35980">
    <property type="interactions" value="4"/>
</dbReference>
<dbReference type="MINT" id="P35980"/>
<dbReference type="STRING" id="10090.ENSMUSP00000147816"/>
<dbReference type="GlyGen" id="P35980">
    <property type="glycosylation" value="1 site, 1 O-linked glycan (1 site)"/>
</dbReference>
<dbReference type="iPTMnet" id="P35980"/>
<dbReference type="PhosphoSitePlus" id="P35980"/>
<dbReference type="SwissPalm" id="P35980"/>
<dbReference type="jPOST" id="P35980"/>
<dbReference type="PaxDb" id="10090-ENSMUSP00000103365"/>
<dbReference type="PeptideAtlas" id="P35980"/>
<dbReference type="ProteomicsDB" id="254890"/>
<dbReference type="Pumba" id="P35980"/>
<dbReference type="DNASU" id="19899"/>
<dbReference type="Ensembl" id="ENSMUST00000072503.13">
    <property type="protein sequence ID" value="ENSMUSP00000072320.7"/>
    <property type="gene ID" value="ENSMUSG00000059070.17"/>
</dbReference>
<dbReference type="Ensembl" id="ENSMUST00000210640.2">
    <property type="protein sequence ID" value="ENSMUSP00000147816.2"/>
    <property type="gene ID" value="ENSMUSG00000059070.17"/>
</dbReference>
<dbReference type="GeneID" id="19899"/>
<dbReference type="KEGG" id="mmu:19899"/>
<dbReference type="UCSC" id="uc009gww.1">
    <property type="organism name" value="mouse"/>
</dbReference>
<dbReference type="AGR" id="MGI:98003"/>
<dbReference type="CTD" id="6141"/>
<dbReference type="MGI" id="MGI:98003">
    <property type="gene designation" value="Rpl18"/>
</dbReference>
<dbReference type="VEuPathDB" id="HostDB:ENSMUSG00000059070"/>
<dbReference type="eggNOG" id="KOG1714">
    <property type="taxonomic scope" value="Eukaryota"/>
</dbReference>
<dbReference type="GeneTree" id="ENSGT00390000012976"/>
<dbReference type="HOGENOM" id="CLU_080024_0_0_1"/>
<dbReference type="InParanoid" id="P35980"/>
<dbReference type="OMA" id="IDICHKN"/>
<dbReference type="OrthoDB" id="6353017at2759"/>
<dbReference type="PhylomeDB" id="P35980"/>
<dbReference type="TreeFam" id="TF300202"/>
<dbReference type="Reactome" id="R-MMU-156827">
    <property type="pathway name" value="L13a-mediated translational silencing of Ceruloplasmin expression"/>
</dbReference>
<dbReference type="Reactome" id="R-MMU-1799339">
    <property type="pathway name" value="SRP-dependent cotranslational protein targeting to membrane"/>
</dbReference>
<dbReference type="Reactome" id="R-MMU-6791226">
    <property type="pathway name" value="Major pathway of rRNA processing in the nucleolus and cytosol"/>
</dbReference>
<dbReference type="Reactome" id="R-MMU-72689">
    <property type="pathway name" value="Formation of a pool of free 40S subunits"/>
</dbReference>
<dbReference type="Reactome" id="R-MMU-72706">
    <property type="pathway name" value="GTP hydrolysis and joining of the 60S ribosomal subunit"/>
</dbReference>
<dbReference type="Reactome" id="R-MMU-975956">
    <property type="pathway name" value="Nonsense Mediated Decay (NMD) independent of the Exon Junction Complex (EJC)"/>
</dbReference>
<dbReference type="Reactome" id="R-MMU-975957">
    <property type="pathway name" value="Nonsense Mediated Decay (NMD) enhanced by the Exon Junction Complex (EJC)"/>
</dbReference>
<dbReference type="BioGRID-ORCS" id="19899">
    <property type="hits" value="26 hits in 55 CRISPR screens"/>
</dbReference>
<dbReference type="ChiTaRS" id="Rpl18">
    <property type="organism name" value="mouse"/>
</dbReference>
<dbReference type="PRO" id="PR:P35980"/>
<dbReference type="Proteomes" id="UP000000589">
    <property type="component" value="Chromosome 7"/>
</dbReference>
<dbReference type="RNAct" id="P35980">
    <property type="molecule type" value="protein"/>
</dbReference>
<dbReference type="Bgee" id="ENSMUSG00000059070">
    <property type="expression patterns" value="Expressed in epiblast (generic) and 67 other cell types or tissues"/>
</dbReference>
<dbReference type="ExpressionAtlas" id="P35980">
    <property type="expression patterns" value="baseline and differential"/>
</dbReference>
<dbReference type="GO" id="GO:0005737">
    <property type="term" value="C:cytoplasm"/>
    <property type="evidence" value="ECO:0000314"/>
    <property type="project" value="ComplexPortal"/>
</dbReference>
<dbReference type="GO" id="GO:0005829">
    <property type="term" value="C:cytosol"/>
    <property type="evidence" value="ECO:0000304"/>
    <property type="project" value="Reactome"/>
</dbReference>
<dbReference type="GO" id="GO:0022625">
    <property type="term" value="C:cytosolic large ribosomal subunit"/>
    <property type="evidence" value="ECO:0000314"/>
    <property type="project" value="UniProtKB"/>
</dbReference>
<dbReference type="GO" id="GO:0005791">
    <property type="term" value="C:rough endoplasmic reticulum"/>
    <property type="evidence" value="ECO:0007669"/>
    <property type="project" value="UniProtKB-SubCell"/>
</dbReference>
<dbReference type="GO" id="GO:0003735">
    <property type="term" value="F:structural constituent of ribosome"/>
    <property type="evidence" value="ECO:0000314"/>
    <property type="project" value="UniProtKB"/>
</dbReference>
<dbReference type="GO" id="GO:0002181">
    <property type="term" value="P:cytoplasmic translation"/>
    <property type="evidence" value="ECO:0000250"/>
    <property type="project" value="UniProtKB"/>
</dbReference>
<dbReference type="FunFam" id="3.100.10.10:FF:000001">
    <property type="entry name" value="60S ribosomal protein L18"/>
    <property type="match status" value="1"/>
</dbReference>
<dbReference type="Gene3D" id="3.100.10.10">
    <property type="match status" value="1"/>
</dbReference>
<dbReference type="InterPro" id="IPR000039">
    <property type="entry name" value="Ribosomal_eL18"/>
</dbReference>
<dbReference type="InterPro" id="IPR021132">
    <property type="entry name" value="Ribosomal_eL18/eL18-A/B/_CS"/>
</dbReference>
<dbReference type="InterPro" id="IPR021131">
    <property type="entry name" value="Ribosomal_uL15/eL18"/>
</dbReference>
<dbReference type="InterPro" id="IPR036227">
    <property type="entry name" value="Ribosomal_uL15/eL18_sf"/>
</dbReference>
<dbReference type="PANTHER" id="PTHR10934">
    <property type="entry name" value="60S RIBOSOMAL PROTEIN L18"/>
    <property type="match status" value="1"/>
</dbReference>
<dbReference type="PANTHER" id="PTHR10934:SF2">
    <property type="entry name" value="LARGE RIBOSOMAL SUBUNIT PROTEIN EL18"/>
    <property type="match status" value="1"/>
</dbReference>
<dbReference type="Pfam" id="PF17135">
    <property type="entry name" value="Ribosomal_L18"/>
    <property type="match status" value="1"/>
</dbReference>
<dbReference type="SUPFAM" id="SSF52080">
    <property type="entry name" value="Ribosomal proteins L15p and L18e"/>
    <property type="match status" value="1"/>
</dbReference>
<dbReference type="PROSITE" id="PS01106">
    <property type="entry name" value="RIBOSOMAL_L18E"/>
    <property type="match status" value="1"/>
</dbReference>
<sequence length="188" mass="21645">MGVDIRHNKDRKVRRKEPKSQDIYLRLLVKLYRFLARRTNSTFNQVVLKRLFMSRTNRPPLSLSRMIRKMKLPGRENKTAVVVGTVTDDVRILEVPKLKVCALRVSSRARSRILKAGGKILTFDQLALESPKGRGTVLLSGPRKGREVYRHFGKAPGTPHSHTKPYVRSKGRKFERARGRRASRGYKN</sequence>
<feature type="chain" id="PRO_0000132770" description="Large ribosomal subunit protein eL18">
    <location>
        <begin position="1"/>
        <end position="188"/>
    </location>
</feature>
<feature type="region of interest" description="Disordered" evidence="3">
    <location>
        <begin position="150"/>
        <end position="188"/>
    </location>
</feature>
<feature type="compositionally biased region" description="Basic residues" evidence="3">
    <location>
        <begin position="161"/>
        <end position="171"/>
    </location>
</feature>
<feature type="compositionally biased region" description="Basic residues" evidence="3">
    <location>
        <begin position="178"/>
        <end position="188"/>
    </location>
</feature>
<feature type="modified residue" description="Phosphoserine" evidence="8">
    <location>
        <position position="130"/>
    </location>
</feature>
<feature type="modified residue" description="Phosphothreonine" evidence="1">
    <location>
        <position position="158"/>
    </location>
</feature>
<feature type="cross-link" description="Glycyl lysine isopeptide (Lys-Gly) (interchain with G-Cter in SUMO2)" evidence="1">
    <location>
        <position position="119"/>
    </location>
</feature>
<feature type="cross-link" description="Glycyl lysine isopeptide (Lys-Gly) (interchain with G-Cter in SUMO2)" evidence="1">
    <location>
        <position position="164"/>
    </location>
</feature>
<feature type="sequence conflict" description="In Ref. 1; AAA40067." evidence="5" ref="1">
    <original>P</original>
    <variation>S</variation>
    <location>
        <position position="59"/>
    </location>
</feature>
<feature type="sequence conflict" description="In Ref. 1; AAA40067." evidence="5" ref="1">
    <original>A</original>
    <variation>V</variation>
    <location>
        <position position="109"/>
    </location>
</feature>
<feature type="sequence conflict" description="In Ref. 2; BAB24923." evidence="5" ref="2">
    <original>K</original>
    <variation>R</variation>
    <location>
        <position position="115"/>
    </location>
</feature>
<feature type="sequence conflict" description="In Ref. 1; AAA40067." evidence="5" ref="1">
    <original>A</original>
    <variation>G</variation>
    <location>
        <position position="116"/>
    </location>
</feature>
<feature type="sequence conflict" description="In Ref. 1; AAA40067." evidence="5" ref="1">
    <original>EVYR</original>
    <variation>DVFP</variation>
    <location>
        <begin position="147"/>
        <end position="150"/>
    </location>
</feature>
<feature type="sequence conflict" description="In Ref. 1; AAA40067." evidence="5" ref="1">
    <original>A</original>
    <variation>V</variation>
    <location>
        <position position="155"/>
    </location>
</feature>
<feature type="sequence conflict" description="In Ref. 1; AAA40067." evidence="5" ref="1">
    <original>HSH</original>
    <variation>YSQ</variation>
    <location>
        <begin position="160"/>
        <end position="162"/>
    </location>
</feature>
<feature type="sequence conflict" description="In Ref. 1; AAA40067." evidence="5" ref="1">
    <original>KF</original>
    <variation>RL</variation>
    <location>
        <begin position="173"/>
        <end position="174"/>
    </location>
</feature>
<proteinExistence type="evidence at protein level"/>
<comment type="function">
    <text evidence="4">Component of the large ribosomal subunit (PubMed:36517592). The ribosome is a large ribonucleoprotein complex responsible for the synthesis of proteins in the cell (PubMed:36517592).</text>
</comment>
<comment type="subunit">
    <text evidence="4">Component of the large ribosomal subunit.</text>
</comment>
<comment type="subcellular location">
    <subcellularLocation>
        <location evidence="1">Cytoplasm</location>
        <location evidence="1">Cytosol</location>
    </subcellularLocation>
    <subcellularLocation>
        <location evidence="4">Cytoplasm</location>
    </subcellularLocation>
    <subcellularLocation>
        <location evidence="2">Rough endoplasmic reticulum</location>
    </subcellularLocation>
    <text evidence="1 2">Detected on cytosolic polysomes (By similarity). Detected in ribosomes that are associated with the rough endoplasmic reticulum (By similarity).</text>
</comment>
<comment type="similarity">
    <text evidence="5">Belongs to the eukaryotic ribosomal protein eL18 family.</text>
</comment>
<gene>
    <name type="primary">Rpl18</name>
</gene>
<accession>P35980</accession>
<accession>Q9CQF1</accession>
<accession>Q9D987</accession>
<evidence type="ECO:0000250" key="1">
    <source>
        <dbReference type="UniProtKB" id="Q07020"/>
    </source>
</evidence>
<evidence type="ECO:0000250" key="2">
    <source>
        <dbReference type="UniProtKB" id="Q95342"/>
    </source>
</evidence>
<evidence type="ECO:0000256" key="3">
    <source>
        <dbReference type="SAM" id="MobiDB-lite"/>
    </source>
</evidence>
<evidence type="ECO:0000269" key="4">
    <source>
    </source>
</evidence>
<evidence type="ECO:0000305" key="5"/>
<evidence type="ECO:0007744" key="6">
    <source>
        <dbReference type="PDB" id="7CPU"/>
    </source>
</evidence>
<evidence type="ECO:0007744" key="7">
    <source>
        <dbReference type="PDB" id="7CPV"/>
    </source>
</evidence>
<evidence type="ECO:0007744" key="8">
    <source>
    </source>
</evidence>